<accession>B0BB25</accession>
<reference key="1">
    <citation type="journal article" date="2008" name="Genome Res.">
        <title>Chlamydia trachomatis: genome sequence analysis of lymphogranuloma venereum isolates.</title>
        <authorList>
            <person name="Thomson N.R."/>
            <person name="Holden M.T.G."/>
            <person name="Carder C."/>
            <person name="Lennard N."/>
            <person name="Lockey S.J."/>
            <person name="Marsh P."/>
            <person name="Skipp P."/>
            <person name="O'Connor C.D."/>
            <person name="Goodhead I."/>
            <person name="Norbertzcak H."/>
            <person name="Harris B."/>
            <person name="Ormond D."/>
            <person name="Rance R."/>
            <person name="Quail M.A."/>
            <person name="Parkhill J."/>
            <person name="Stephens R.S."/>
            <person name="Clarke I.N."/>
        </authorList>
    </citation>
    <scope>NUCLEOTIDE SEQUENCE [LARGE SCALE GENOMIC DNA]</scope>
    <source>
        <strain>UCH-1/proctitis</strain>
    </source>
</reference>
<name>DCD_CHLTB</name>
<sequence length="190" mass="21384">MGIKEDNWIRKMAIEEGMIEPFADSQVKLHPETGEKLISYGLSSYGYDLRISREFKVFTNVYNSLVDPKCFTEDALISIVDDVCIIPPNSFALARSVEYFRIPRNVLTVCIGKSTYARCGLIVNVTPFEPEWEGYVTIEISNTTPLPAKVYANEGIAQVLFFEGDAACDVSYAERQGKYQKQQGITIPFV</sequence>
<feature type="chain" id="PRO_1000096416" description="dCTP deaminase">
    <location>
        <begin position="1"/>
        <end position="190"/>
    </location>
</feature>
<feature type="active site" description="Proton donor/acceptor" evidence="1">
    <location>
        <position position="139"/>
    </location>
</feature>
<feature type="binding site" evidence="1">
    <location>
        <begin position="113"/>
        <end position="118"/>
    </location>
    <ligand>
        <name>dCTP</name>
        <dbReference type="ChEBI" id="CHEBI:61481"/>
    </ligand>
</feature>
<feature type="binding site" evidence="1">
    <location>
        <position position="158"/>
    </location>
    <ligand>
        <name>dCTP</name>
        <dbReference type="ChEBI" id="CHEBI:61481"/>
    </ligand>
</feature>
<feature type="binding site" evidence="1">
    <location>
        <position position="172"/>
    </location>
    <ligand>
        <name>dCTP</name>
        <dbReference type="ChEBI" id="CHEBI:61481"/>
    </ligand>
</feature>
<feature type="binding site" evidence="1">
    <location>
        <position position="181"/>
    </location>
    <ligand>
        <name>dCTP</name>
        <dbReference type="ChEBI" id="CHEBI:61481"/>
    </ligand>
</feature>
<feature type="binding site" evidence="1">
    <location>
        <position position="182"/>
    </location>
    <ligand>
        <name>dCTP</name>
        <dbReference type="ChEBI" id="CHEBI:61481"/>
    </ligand>
</feature>
<organism>
    <name type="scientific">Chlamydia trachomatis serovar L2b (strain UCH-1/proctitis)</name>
    <dbReference type="NCBI Taxonomy" id="471473"/>
    <lineage>
        <taxon>Bacteria</taxon>
        <taxon>Pseudomonadati</taxon>
        <taxon>Chlamydiota</taxon>
        <taxon>Chlamydiia</taxon>
        <taxon>Chlamydiales</taxon>
        <taxon>Chlamydiaceae</taxon>
        <taxon>Chlamydia/Chlamydophila group</taxon>
        <taxon>Chlamydia</taxon>
    </lineage>
</organism>
<keyword id="KW-0378">Hydrolase</keyword>
<keyword id="KW-0546">Nucleotide metabolism</keyword>
<keyword id="KW-0547">Nucleotide-binding</keyword>
<proteinExistence type="inferred from homology"/>
<evidence type="ECO:0000255" key="1">
    <source>
        <dbReference type="HAMAP-Rule" id="MF_00146"/>
    </source>
</evidence>
<dbReference type="EC" id="3.5.4.13" evidence="1"/>
<dbReference type="EMBL" id="AM884177">
    <property type="protein sequence ID" value="CAP06687.1"/>
    <property type="molecule type" value="Genomic_DNA"/>
</dbReference>
<dbReference type="RefSeq" id="WP_009873511.1">
    <property type="nucleotide sequence ID" value="NC_010280.2"/>
</dbReference>
<dbReference type="SMR" id="B0BB25"/>
<dbReference type="KEGG" id="ctl:CTLon_0289"/>
<dbReference type="HOGENOM" id="CLU_087476_4_0_0"/>
<dbReference type="UniPathway" id="UPA00610">
    <property type="reaction ID" value="UER00665"/>
</dbReference>
<dbReference type="Proteomes" id="UP001154401">
    <property type="component" value="Chromosome"/>
</dbReference>
<dbReference type="GO" id="GO:0008829">
    <property type="term" value="F:dCTP deaminase activity"/>
    <property type="evidence" value="ECO:0007669"/>
    <property type="project" value="UniProtKB-UniRule"/>
</dbReference>
<dbReference type="GO" id="GO:0000166">
    <property type="term" value="F:nucleotide binding"/>
    <property type="evidence" value="ECO:0007669"/>
    <property type="project" value="UniProtKB-KW"/>
</dbReference>
<dbReference type="GO" id="GO:0006226">
    <property type="term" value="P:dUMP biosynthetic process"/>
    <property type="evidence" value="ECO:0007669"/>
    <property type="project" value="UniProtKB-UniPathway"/>
</dbReference>
<dbReference type="GO" id="GO:0006229">
    <property type="term" value="P:dUTP biosynthetic process"/>
    <property type="evidence" value="ECO:0007669"/>
    <property type="project" value="UniProtKB-UniRule"/>
</dbReference>
<dbReference type="GO" id="GO:0015949">
    <property type="term" value="P:nucleobase-containing small molecule interconversion"/>
    <property type="evidence" value="ECO:0007669"/>
    <property type="project" value="TreeGrafter"/>
</dbReference>
<dbReference type="CDD" id="cd07557">
    <property type="entry name" value="trimeric_dUTPase"/>
    <property type="match status" value="1"/>
</dbReference>
<dbReference type="FunFam" id="2.70.40.10:FF:000001">
    <property type="entry name" value="dCTP deaminase"/>
    <property type="match status" value="1"/>
</dbReference>
<dbReference type="Gene3D" id="2.70.40.10">
    <property type="match status" value="1"/>
</dbReference>
<dbReference type="HAMAP" id="MF_00146">
    <property type="entry name" value="dCTP_deaminase"/>
    <property type="match status" value="1"/>
</dbReference>
<dbReference type="InterPro" id="IPR011962">
    <property type="entry name" value="dCTP_deaminase"/>
</dbReference>
<dbReference type="InterPro" id="IPR036157">
    <property type="entry name" value="dUTPase-like_sf"/>
</dbReference>
<dbReference type="InterPro" id="IPR033704">
    <property type="entry name" value="dUTPase_trimeric"/>
</dbReference>
<dbReference type="NCBIfam" id="TIGR02274">
    <property type="entry name" value="dCTP_deam"/>
    <property type="match status" value="1"/>
</dbReference>
<dbReference type="PANTHER" id="PTHR42680">
    <property type="entry name" value="DCTP DEAMINASE"/>
    <property type="match status" value="1"/>
</dbReference>
<dbReference type="PANTHER" id="PTHR42680:SF3">
    <property type="entry name" value="DCTP DEAMINASE"/>
    <property type="match status" value="1"/>
</dbReference>
<dbReference type="Pfam" id="PF22769">
    <property type="entry name" value="DCD"/>
    <property type="match status" value="1"/>
</dbReference>
<dbReference type="SUPFAM" id="SSF51283">
    <property type="entry name" value="dUTPase-like"/>
    <property type="match status" value="1"/>
</dbReference>
<comment type="function">
    <text evidence="1">Catalyzes the deamination of dCTP to dUTP.</text>
</comment>
<comment type="catalytic activity">
    <reaction evidence="1">
        <text>dCTP + H2O + H(+) = dUTP + NH4(+)</text>
        <dbReference type="Rhea" id="RHEA:22680"/>
        <dbReference type="ChEBI" id="CHEBI:15377"/>
        <dbReference type="ChEBI" id="CHEBI:15378"/>
        <dbReference type="ChEBI" id="CHEBI:28938"/>
        <dbReference type="ChEBI" id="CHEBI:61481"/>
        <dbReference type="ChEBI" id="CHEBI:61555"/>
        <dbReference type="EC" id="3.5.4.13"/>
    </reaction>
</comment>
<comment type="pathway">
    <text evidence="1">Pyrimidine metabolism; dUMP biosynthesis; dUMP from dCTP (dUTP route): step 1/2.</text>
</comment>
<comment type="subunit">
    <text evidence="1">Homotrimer.</text>
</comment>
<comment type="similarity">
    <text evidence="1">Belongs to the dCTP deaminase family.</text>
</comment>
<protein>
    <recommendedName>
        <fullName evidence="1">dCTP deaminase</fullName>
        <ecNumber evidence="1">3.5.4.13</ecNumber>
    </recommendedName>
    <alternativeName>
        <fullName evidence="1">Deoxycytidine triphosphate deaminase</fullName>
    </alternativeName>
</protein>
<gene>
    <name evidence="1" type="primary">dcd</name>
    <name type="ordered locus">CTLon_0289</name>
</gene>